<sequence>MGIEEKAGNLGIVTTTLETVVNWGRTNAMWPLLFGLACCAIEMMGAQASNYDLSRFGMELNRASPRQADLMIVAGRVSRKMAPVVRRLYDQMPEPKWVIAMGDCAACGGIFNNYAIVQGVDEVVPVDVYVAGCPPRPEALIDGIMMLHQKVMREKISGKKESPIRIDQPLVQVK</sequence>
<organism>
    <name type="scientific">Chloroflexus aurantiacus (strain ATCC 29366 / DSM 635 / J-10-fl)</name>
    <dbReference type="NCBI Taxonomy" id="324602"/>
    <lineage>
        <taxon>Bacteria</taxon>
        <taxon>Bacillati</taxon>
        <taxon>Chloroflexota</taxon>
        <taxon>Chloroflexia</taxon>
        <taxon>Chloroflexales</taxon>
        <taxon>Chloroflexineae</taxon>
        <taxon>Chloroflexaceae</taxon>
        <taxon>Chloroflexus</taxon>
    </lineage>
</organism>
<gene>
    <name evidence="1" type="primary">nuoB2</name>
    <name type="ordered locus">Caur_2897</name>
</gene>
<proteinExistence type="inferred from homology"/>
<evidence type="ECO:0000255" key="1">
    <source>
        <dbReference type="HAMAP-Rule" id="MF_01356"/>
    </source>
</evidence>
<keyword id="KW-0004">4Fe-4S</keyword>
<keyword id="KW-1003">Cell membrane</keyword>
<keyword id="KW-0408">Iron</keyword>
<keyword id="KW-0411">Iron-sulfur</keyword>
<keyword id="KW-0472">Membrane</keyword>
<keyword id="KW-0479">Metal-binding</keyword>
<keyword id="KW-0520">NAD</keyword>
<keyword id="KW-0874">Quinone</keyword>
<keyword id="KW-1185">Reference proteome</keyword>
<keyword id="KW-1278">Translocase</keyword>
<keyword id="KW-0813">Transport</keyword>
<keyword id="KW-0830">Ubiquinone</keyword>
<feature type="chain" id="PRO_0000376178" description="NADH-quinone oxidoreductase subunit B 2">
    <location>
        <begin position="1"/>
        <end position="174"/>
    </location>
</feature>
<feature type="binding site" evidence="1">
    <location>
        <position position="38"/>
    </location>
    <ligand>
        <name>[4Fe-4S] cluster</name>
        <dbReference type="ChEBI" id="CHEBI:49883"/>
    </ligand>
</feature>
<feature type="binding site" evidence="1">
    <location>
        <position position="39"/>
    </location>
    <ligand>
        <name>[4Fe-4S] cluster</name>
        <dbReference type="ChEBI" id="CHEBI:49883"/>
    </ligand>
</feature>
<feature type="binding site" evidence="1">
    <location>
        <position position="104"/>
    </location>
    <ligand>
        <name>[4Fe-4S] cluster</name>
        <dbReference type="ChEBI" id="CHEBI:49883"/>
    </ligand>
</feature>
<feature type="binding site" evidence="1">
    <location>
        <position position="133"/>
    </location>
    <ligand>
        <name>[4Fe-4S] cluster</name>
        <dbReference type="ChEBI" id="CHEBI:49883"/>
    </ligand>
</feature>
<reference key="1">
    <citation type="journal article" date="2011" name="BMC Genomics">
        <title>Complete genome sequence of the filamentous anoxygenic phototrophic bacterium Chloroflexus aurantiacus.</title>
        <authorList>
            <person name="Tang K.H."/>
            <person name="Barry K."/>
            <person name="Chertkov O."/>
            <person name="Dalin E."/>
            <person name="Han C.S."/>
            <person name="Hauser L.J."/>
            <person name="Honchak B.M."/>
            <person name="Karbach L.E."/>
            <person name="Land M.L."/>
            <person name="Lapidus A."/>
            <person name="Larimer F.W."/>
            <person name="Mikhailova N."/>
            <person name="Pitluck S."/>
            <person name="Pierson B.K."/>
            <person name="Blankenship R.E."/>
        </authorList>
    </citation>
    <scope>NUCLEOTIDE SEQUENCE [LARGE SCALE GENOMIC DNA]</scope>
    <source>
        <strain>ATCC 29366 / DSM 635 / J-10-fl</strain>
    </source>
</reference>
<protein>
    <recommendedName>
        <fullName evidence="1">NADH-quinone oxidoreductase subunit B 2</fullName>
        <ecNumber evidence="1">7.1.1.-</ecNumber>
    </recommendedName>
    <alternativeName>
        <fullName evidence="1">NADH dehydrogenase I subunit B 2</fullName>
    </alternativeName>
    <alternativeName>
        <fullName evidence="1">NDH-1 subunit B 2</fullName>
    </alternativeName>
</protein>
<dbReference type="EC" id="7.1.1.-" evidence="1"/>
<dbReference type="EMBL" id="CP000909">
    <property type="protein sequence ID" value="ABY36096.1"/>
    <property type="molecule type" value="Genomic_DNA"/>
</dbReference>
<dbReference type="RefSeq" id="WP_012258749.1">
    <property type="nucleotide sequence ID" value="NC_010175.1"/>
</dbReference>
<dbReference type="RefSeq" id="YP_001636485.1">
    <property type="nucleotide sequence ID" value="NC_010175.1"/>
</dbReference>
<dbReference type="SMR" id="A9WFB2"/>
<dbReference type="STRING" id="324602.Caur_2897"/>
<dbReference type="EnsemblBacteria" id="ABY36096">
    <property type="protein sequence ID" value="ABY36096"/>
    <property type="gene ID" value="Caur_2897"/>
</dbReference>
<dbReference type="KEGG" id="cau:Caur_2897"/>
<dbReference type="PATRIC" id="fig|324602.8.peg.3263"/>
<dbReference type="eggNOG" id="COG0377">
    <property type="taxonomic scope" value="Bacteria"/>
</dbReference>
<dbReference type="HOGENOM" id="CLU_055737_7_3_0"/>
<dbReference type="InParanoid" id="A9WFB2"/>
<dbReference type="Proteomes" id="UP000002008">
    <property type="component" value="Chromosome"/>
</dbReference>
<dbReference type="GO" id="GO:0005886">
    <property type="term" value="C:plasma membrane"/>
    <property type="evidence" value="ECO:0007669"/>
    <property type="project" value="UniProtKB-SubCell"/>
</dbReference>
<dbReference type="GO" id="GO:0045271">
    <property type="term" value="C:respiratory chain complex I"/>
    <property type="evidence" value="ECO:0000318"/>
    <property type="project" value="GO_Central"/>
</dbReference>
<dbReference type="GO" id="GO:0051539">
    <property type="term" value="F:4 iron, 4 sulfur cluster binding"/>
    <property type="evidence" value="ECO:0007669"/>
    <property type="project" value="UniProtKB-KW"/>
</dbReference>
<dbReference type="GO" id="GO:0005506">
    <property type="term" value="F:iron ion binding"/>
    <property type="evidence" value="ECO:0007669"/>
    <property type="project" value="UniProtKB-UniRule"/>
</dbReference>
<dbReference type="GO" id="GO:0008137">
    <property type="term" value="F:NADH dehydrogenase (ubiquinone) activity"/>
    <property type="evidence" value="ECO:0000318"/>
    <property type="project" value="GO_Central"/>
</dbReference>
<dbReference type="GO" id="GO:0050136">
    <property type="term" value="F:NADH:ubiquinone reductase (non-electrogenic) activity"/>
    <property type="evidence" value="ECO:0007669"/>
    <property type="project" value="UniProtKB-UniRule"/>
</dbReference>
<dbReference type="GO" id="GO:0048038">
    <property type="term" value="F:quinone binding"/>
    <property type="evidence" value="ECO:0007669"/>
    <property type="project" value="UniProtKB-KW"/>
</dbReference>
<dbReference type="GO" id="GO:0009060">
    <property type="term" value="P:aerobic respiration"/>
    <property type="evidence" value="ECO:0000318"/>
    <property type="project" value="GO_Central"/>
</dbReference>
<dbReference type="GO" id="GO:0015990">
    <property type="term" value="P:electron transport coupled proton transport"/>
    <property type="evidence" value="ECO:0000318"/>
    <property type="project" value="GO_Central"/>
</dbReference>
<dbReference type="FunFam" id="3.40.50.12280:FF:000004">
    <property type="entry name" value="NADH-quinone oxidoreductase subunit B"/>
    <property type="match status" value="1"/>
</dbReference>
<dbReference type="Gene3D" id="3.40.50.12280">
    <property type="match status" value="1"/>
</dbReference>
<dbReference type="HAMAP" id="MF_01356">
    <property type="entry name" value="NDH1_NuoB"/>
    <property type="match status" value="1"/>
</dbReference>
<dbReference type="InterPro" id="IPR006137">
    <property type="entry name" value="NADH_UbQ_OxRdtase-like_20kDa"/>
</dbReference>
<dbReference type="InterPro" id="IPR006138">
    <property type="entry name" value="NADH_UQ_OxRdtase_20Kd_su"/>
</dbReference>
<dbReference type="NCBIfam" id="TIGR01957">
    <property type="entry name" value="nuoB_fam"/>
    <property type="match status" value="1"/>
</dbReference>
<dbReference type="NCBIfam" id="NF005012">
    <property type="entry name" value="PRK06411.1"/>
    <property type="match status" value="1"/>
</dbReference>
<dbReference type="PANTHER" id="PTHR11995">
    <property type="entry name" value="NADH DEHYDROGENASE"/>
    <property type="match status" value="1"/>
</dbReference>
<dbReference type="PANTHER" id="PTHR11995:SF14">
    <property type="entry name" value="NADH DEHYDROGENASE [UBIQUINONE] IRON-SULFUR PROTEIN 7, MITOCHONDRIAL"/>
    <property type="match status" value="1"/>
</dbReference>
<dbReference type="Pfam" id="PF01058">
    <property type="entry name" value="Oxidored_q6"/>
    <property type="match status" value="1"/>
</dbReference>
<dbReference type="SUPFAM" id="SSF56770">
    <property type="entry name" value="HydA/Nqo6-like"/>
    <property type="match status" value="1"/>
</dbReference>
<comment type="function">
    <text evidence="1">NDH-1 shuttles electrons from NADH, via FMN and iron-sulfur (Fe-S) centers, to quinones in the respiratory chain. The immediate electron acceptor for the enzyme in this species is believed to be ubiquinone. Couples the redox reaction to proton translocation (for every two electrons transferred, four hydrogen ions are translocated across the cytoplasmic membrane), and thus conserves the redox energy in a proton gradient.</text>
</comment>
<comment type="catalytic activity">
    <reaction evidence="1">
        <text>a quinone + NADH + 5 H(+)(in) = a quinol + NAD(+) + 4 H(+)(out)</text>
        <dbReference type="Rhea" id="RHEA:57888"/>
        <dbReference type="ChEBI" id="CHEBI:15378"/>
        <dbReference type="ChEBI" id="CHEBI:24646"/>
        <dbReference type="ChEBI" id="CHEBI:57540"/>
        <dbReference type="ChEBI" id="CHEBI:57945"/>
        <dbReference type="ChEBI" id="CHEBI:132124"/>
    </reaction>
</comment>
<comment type="cofactor">
    <cofactor evidence="1">
        <name>[4Fe-4S] cluster</name>
        <dbReference type="ChEBI" id="CHEBI:49883"/>
    </cofactor>
    <text evidence="1">Binds 1 [4Fe-4S] cluster.</text>
</comment>
<comment type="subunit">
    <text evidence="1">NDH-1 is composed of 14 different subunits. Subunits NuoB, C, D, E, F, and G constitute the peripheral sector of the complex.</text>
</comment>
<comment type="subcellular location">
    <subcellularLocation>
        <location evidence="1">Cell membrane</location>
        <topology evidence="1">Peripheral membrane protein</topology>
        <orientation evidence="1">Cytoplasmic side</orientation>
    </subcellularLocation>
</comment>
<comment type="similarity">
    <text evidence="1">Belongs to the complex I 20 kDa subunit family.</text>
</comment>
<name>NUOB2_CHLAA</name>
<accession>A9WFB2</accession>